<organism>
    <name type="scientific">Pseudomonas aeruginosa (strain UCBPP-PA14)</name>
    <dbReference type="NCBI Taxonomy" id="208963"/>
    <lineage>
        <taxon>Bacteria</taxon>
        <taxon>Pseudomonadati</taxon>
        <taxon>Pseudomonadota</taxon>
        <taxon>Gammaproteobacteria</taxon>
        <taxon>Pseudomonadales</taxon>
        <taxon>Pseudomonadaceae</taxon>
        <taxon>Pseudomonas</taxon>
    </lineage>
</organism>
<comment type="function">
    <text evidence="1">Catalyzes the N-acylation of UDP-3-O-acylglucosamine using 3-hydroxyacyl-ACP as the acyl donor. Is involved in the biosynthesis of lipid A, a phosphorylated glycolipid that anchors the lipopolysaccharide to the outer membrane of the cell.</text>
</comment>
<comment type="catalytic activity">
    <reaction evidence="1">
        <text>a UDP-3-O-[(3R)-3-hydroxyacyl]-alpha-D-glucosamine + a (3R)-hydroxyacyl-[ACP] = a UDP-2-N,3-O-bis[(3R)-3-hydroxyacyl]-alpha-D-glucosamine + holo-[ACP] + H(+)</text>
        <dbReference type="Rhea" id="RHEA:53836"/>
        <dbReference type="Rhea" id="RHEA-COMP:9685"/>
        <dbReference type="Rhea" id="RHEA-COMP:9945"/>
        <dbReference type="ChEBI" id="CHEBI:15378"/>
        <dbReference type="ChEBI" id="CHEBI:64479"/>
        <dbReference type="ChEBI" id="CHEBI:78827"/>
        <dbReference type="ChEBI" id="CHEBI:137740"/>
        <dbReference type="ChEBI" id="CHEBI:137748"/>
        <dbReference type="EC" id="2.3.1.191"/>
    </reaction>
</comment>
<comment type="pathway">
    <text evidence="1">Bacterial outer membrane biogenesis; LPS lipid A biosynthesis.</text>
</comment>
<comment type="subunit">
    <text evidence="1">Homotrimer.</text>
</comment>
<comment type="similarity">
    <text evidence="1">Belongs to the transferase hexapeptide repeat family. LpxD subfamily.</text>
</comment>
<name>LPXD_PSEAB</name>
<keyword id="KW-0012">Acyltransferase</keyword>
<keyword id="KW-0441">Lipid A biosynthesis</keyword>
<keyword id="KW-0444">Lipid biosynthesis</keyword>
<keyword id="KW-0443">Lipid metabolism</keyword>
<keyword id="KW-0677">Repeat</keyword>
<keyword id="KW-0808">Transferase</keyword>
<accession>Q02RB8</accession>
<gene>
    <name evidence="1" type="primary">lpxD</name>
    <name type="ordered locus">PA14_17180</name>
</gene>
<evidence type="ECO:0000255" key="1">
    <source>
        <dbReference type="HAMAP-Rule" id="MF_00523"/>
    </source>
</evidence>
<reference key="1">
    <citation type="journal article" date="2006" name="Genome Biol.">
        <title>Genomic analysis reveals that Pseudomonas aeruginosa virulence is combinatorial.</title>
        <authorList>
            <person name="Lee D.G."/>
            <person name="Urbach J.M."/>
            <person name="Wu G."/>
            <person name="Liberati N.T."/>
            <person name="Feinbaum R.L."/>
            <person name="Miyata S."/>
            <person name="Diggins L.T."/>
            <person name="He J."/>
            <person name="Saucier M."/>
            <person name="Deziel E."/>
            <person name="Friedman L."/>
            <person name="Li L."/>
            <person name="Grills G."/>
            <person name="Montgomery K."/>
            <person name="Kucherlapati R."/>
            <person name="Rahme L.G."/>
            <person name="Ausubel F.M."/>
        </authorList>
    </citation>
    <scope>NUCLEOTIDE SEQUENCE [LARGE SCALE GENOMIC DNA]</scope>
    <source>
        <strain>UCBPP-PA14</strain>
    </source>
</reference>
<feature type="chain" id="PRO_1000050951" description="UDP-3-O-acylglucosamine N-acyltransferase">
    <location>
        <begin position="1"/>
        <end position="353"/>
    </location>
</feature>
<feature type="active site" description="Proton acceptor" evidence="1">
    <location>
        <position position="242"/>
    </location>
</feature>
<protein>
    <recommendedName>
        <fullName evidence="1">UDP-3-O-acylglucosamine N-acyltransferase</fullName>
        <ecNumber evidence="1">2.3.1.191</ecNumber>
    </recommendedName>
</protein>
<dbReference type="EC" id="2.3.1.191" evidence="1"/>
<dbReference type="EMBL" id="CP000438">
    <property type="protein sequence ID" value="ABJ12879.1"/>
    <property type="molecule type" value="Genomic_DNA"/>
</dbReference>
<dbReference type="RefSeq" id="WP_003092378.1">
    <property type="nucleotide sequence ID" value="NZ_CP034244.1"/>
</dbReference>
<dbReference type="SMR" id="Q02RB8"/>
<dbReference type="KEGG" id="pau:PA14_17180"/>
<dbReference type="PseudoCAP" id="PA14_17180"/>
<dbReference type="HOGENOM" id="CLU_049865_0_1_6"/>
<dbReference type="BioCyc" id="PAER208963:G1G74-1415-MONOMER"/>
<dbReference type="BRENDA" id="2.3.1.191">
    <property type="organism ID" value="5087"/>
</dbReference>
<dbReference type="UniPathway" id="UPA00973"/>
<dbReference type="Proteomes" id="UP000000653">
    <property type="component" value="Chromosome"/>
</dbReference>
<dbReference type="GO" id="GO:0016020">
    <property type="term" value="C:membrane"/>
    <property type="evidence" value="ECO:0007669"/>
    <property type="project" value="GOC"/>
</dbReference>
<dbReference type="GO" id="GO:0016410">
    <property type="term" value="F:N-acyltransferase activity"/>
    <property type="evidence" value="ECO:0007669"/>
    <property type="project" value="InterPro"/>
</dbReference>
<dbReference type="GO" id="GO:0009245">
    <property type="term" value="P:lipid A biosynthetic process"/>
    <property type="evidence" value="ECO:0007669"/>
    <property type="project" value="UniProtKB-UniRule"/>
</dbReference>
<dbReference type="CDD" id="cd03352">
    <property type="entry name" value="LbH_LpxD"/>
    <property type="match status" value="1"/>
</dbReference>
<dbReference type="Gene3D" id="1.20.5.170">
    <property type="match status" value="1"/>
</dbReference>
<dbReference type="Gene3D" id="2.160.10.10">
    <property type="entry name" value="Hexapeptide repeat proteins"/>
    <property type="match status" value="1"/>
</dbReference>
<dbReference type="Gene3D" id="3.40.1390.10">
    <property type="entry name" value="MurE/MurF, N-terminal domain"/>
    <property type="match status" value="1"/>
</dbReference>
<dbReference type="HAMAP" id="MF_00523">
    <property type="entry name" value="LpxD"/>
    <property type="match status" value="1"/>
</dbReference>
<dbReference type="InterPro" id="IPR001451">
    <property type="entry name" value="Hexapep"/>
</dbReference>
<dbReference type="InterPro" id="IPR018357">
    <property type="entry name" value="Hexapep_transf_CS"/>
</dbReference>
<dbReference type="InterPro" id="IPR007691">
    <property type="entry name" value="LpxD"/>
</dbReference>
<dbReference type="InterPro" id="IPR011004">
    <property type="entry name" value="Trimer_LpxA-like_sf"/>
</dbReference>
<dbReference type="InterPro" id="IPR020573">
    <property type="entry name" value="UDP_GlcNAc_AcTrfase_non-rep"/>
</dbReference>
<dbReference type="NCBIfam" id="TIGR01853">
    <property type="entry name" value="lipid_A_lpxD"/>
    <property type="match status" value="1"/>
</dbReference>
<dbReference type="NCBIfam" id="NF002060">
    <property type="entry name" value="PRK00892.1"/>
    <property type="match status" value="1"/>
</dbReference>
<dbReference type="PANTHER" id="PTHR43378">
    <property type="entry name" value="UDP-3-O-ACYLGLUCOSAMINE N-ACYLTRANSFERASE"/>
    <property type="match status" value="1"/>
</dbReference>
<dbReference type="PANTHER" id="PTHR43378:SF2">
    <property type="entry name" value="UDP-3-O-ACYLGLUCOSAMINE N-ACYLTRANSFERASE 1, MITOCHONDRIAL-RELATED"/>
    <property type="match status" value="1"/>
</dbReference>
<dbReference type="Pfam" id="PF00132">
    <property type="entry name" value="Hexapep"/>
    <property type="match status" value="2"/>
</dbReference>
<dbReference type="Pfam" id="PF04613">
    <property type="entry name" value="LpxD"/>
    <property type="match status" value="1"/>
</dbReference>
<dbReference type="SUPFAM" id="SSF51161">
    <property type="entry name" value="Trimeric LpxA-like enzymes"/>
    <property type="match status" value="1"/>
</dbReference>
<dbReference type="PROSITE" id="PS00101">
    <property type="entry name" value="HEXAPEP_TRANSFERASES"/>
    <property type="match status" value="1"/>
</dbReference>
<proteinExistence type="inferred from homology"/>
<sequence length="353" mass="36221">MMSTLSYTLGQLAAHVGAELRGDADLPIQGLATLQEAGPAQLSFLANPQYRKYLPESRAGAVLLTAADADGFSGTALVVANPYLAYASLSHLFDRKPKAAAGIHPTAIVAADAEVDPSASVGAYAVIESGARIGAGVSIGAHCVIGARSVIGEGGWLAPRVTLYHDVTIGARVSIQSGAVIGGEGFGFANEKGVWQKIAQIGGVTIGDDVEIGANTTIDRGALSDTLIGNGVKLDNQIMIAHNVQIGDHTAMAACVGISGSAKIGRHCMLAGGVGLVGHIEICDNVFVTGMTMVTRSITEPGSYSSGTAMQPAAEWKKSAARIRQLDDMARRLQQLEKRLAAVTSSGDASSDA</sequence>